<feature type="chain" id="PRO_1000141257" description="Small ribosomal subunit protein uS13">
    <location>
        <begin position="1"/>
        <end position="122"/>
    </location>
</feature>
<feature type="region of interest" description="Disordered" evidence="2">
    <location>
        <begin position="95"/>
        <end position="122"/>
    </location>
</feature>
<comment type="function">
    <text evidence="1">Located at the top of the head of the 30S subunit, it contacts several helices of the 16S rRNA. In the 70S ribosome it contacts the 23S rRNA (bridge B1a) and protein L5 of the 50S subunit (bridge B1b), connecting the 2 subunits; these bridges are implicated in subunit movement. Contacts the tRNAs in the A and P-sites.</text>
</comment>
<comment type="subunit">
    <text evidence="1">Part of the 30S ribosomal subunit. Forms a loose heterodimer with protein S19. Forms two bridges to the 50S subunit in the 70S ribosome.</text>
</comment>
<comment type="similarity">
    <text evidence="1">Belongs to the universal ribosomal protein uS13 family.</text>
</comment>
<sequence length="122" mass="13853">MARIAGVDLPRGKRVDIALTYIYGIGRTTALQILDVTGVDWSRNIDDLSADEVNEIRKELEQNHKVEGDLRREISSNIKRLMDIGCYRGLRHRRGLPVHGQRTHTNARTRKGPRRGAVGKKK</sequence>
<proteinExistence type="inferred from homology"/>
<organism>
    <name type="scientific">Nitratidesulfovibrio vulgaris (strain DSM 19637 / Miyazaki F)</name>
    <name type="common">Desulfovibrio vulgaris</name>
    <dbReference type="NCBI Taxonomy" id="883"/>
    <lineage>
        <taxon>Bacteria</taxon>
        <taxon>Pseudomonadati</taxon>
        <taxon>Thermodesulfobacteriota</taxon>
        <taxon>Desulfovibrionia</taxon>
        <taxon>Desulfovibrionales</taxon>
        <taxon>Desulfovibrionaceae</taxon>
        <taxon>Nitratidesulfovibrio</taxon>
    </lineage>
</organism>
<accession>B8DNK6</accession>
<reference key="1">
    <citation type="submission" date="2008-10" db="EMBL/GenBank/DDBJ databases">
        <title>Complete sequence of Desulfovibrio vulgaris str. 'Miyazaki F'.</title>
        <authorList>
            <person name="Lucas S."/>
            <person name="Copeland A."/>
            <person name="Lapidus A."/>
            <person name="Glavina del Rio T."/>
            <person name="Dalin E."/>
            <person name="Tice H."/>
            <person name="Bruce D."/>
            <person name="Goodwin L."/>
            <person name="Pitluck S."/>
            <person name="Sims D."/>
            <person name="Brettin T."/>
            <person name="Detter J.C."/>
            <person name="Han C."/>
            <person name="Larimer F."/>
            <person name="Land M."/>
            <person name="Hauser L."/>
            <person name="Kyrpides N."/>
            <person name="Mikhailova N."/>
            <person name="Hazen T.C."/>
            <person name="Richardson P."/>
        </authorList>
    </citation>
    <scope>NUCLEOTIDE SEQUENCE [LARGE SCALE GENOMIC DNA]</scope>
    <source>
        <strain>DSM 19637 / Miyazaki F</strain>
    </source>
</reference>
<protein>
    <recommendedName>
        <fullName evidence="1">Small ribosomal subunit protein uS13</fullName>
    </recommendedName>
    <alternativeName>
        <fullName evidence="3">30S ribosomal protein S13</fullName>
    </alternativeName>
</protein>
<dbReference type="EMBL" id="CP001197">
    <property type="protein sequence ID" value="ACL07063.1"/>
    <property type="molecule type" value="Genomic_DNA"/>
</dbReference>
<dbReference type="SMR" id="B8DNK6"/>
<dbReference type="STRING" id="883.DvMF_0102"/>
<dbReference type="KEGG" id="dvm:DvMF_0102"/>
<dbReference type="eggNOG" id="COG0099">
    <property type="taxonomic scope" value="Bacteria"/>
</dbReference>
<dbReference type="HOGENOM" id="CLU_103849_1_2_7"/>
<dbReference type="OrthoDB" id="9803610at2"/>
<dbReference type="GO" id="GO:0005829">
    <property type="term" value="C:cytosol"/>
    <property type="evidence" value="ECO:0007669"/>
    <property type="project" value="TreeGrafter"/>
</dbReference>
<dbReference type="GO" id="GO:0015935">
    <property type="term" value="C:small ribosomal subunit"/>
    <property type="evidence" value="ECO:0007669"/>
    <property type="project" value="TreeGrafter"/>
</dbReference>
<dbReference type="GO" id="GO:0019843">
    <property type="term" value="F:rRNA binding"/>
    <property type="evidence" value="ECO:0007669"/>
    <property type="project" value="UniProtKB-UniRule"/>
</dbReference>
<dbReference type="GO" id="GO:0003735">
    <property type="term" value="F:structural constituent of ribosome"/>
    <property type="evidence" value="ECO:0007669"/>
    <property type="project" value="InterPro"/>
</dbReference>
<dbReference type="GO" id="GO:0000049">
    <property type="term" value="F:tRNA binding"/>
    <property type="evidence" value="ECO:0007669"/>
    <property type="project" value="UniProtKB-UniRule"/>
</dbReference>
<dbReference type="GO" id="GO:0006412">
    <property type="term" value="P:translation"/>
    <property type="evidence" value="ECO:0007669"/>
    <property type="project" value="UniProtKB-UniRule"/>
</dbReference>
<dbReference type="FunFam" id="1.10.8.50:FF:000001">
    <property type="entry name" value="30S ribosomal protein S13"/>
    <property type="match status" value="1"/>
</dbReference>
<dbReference type="FunFam" id="4.10.910.10:FF:000001">
    <property type="entry name" value="30S ribosomal protein S13"/>
    <property type="match status" value="1"/>
</dbReference>
<dbReference type="Gene3D" id="1.10.8.50">
    <property type="match status" value="1"/>
</dbReference>
<dbReference type="Gene3D" id="4.10.910.10">
    <property type="entry name" value="30s ribosomal protein s13, domain 2"/>
    <property type="match status" value="1"/>
</dbReference>
<dbReference type="HAMAP" id="MF_01315">
    <property type="entry name" value="Ribosomal_uS13"/>
    <property type="match status" value="1"/>
</dbReference>
<dbReference type="InterPro" id="IPR027437">
    <property type="entry name" value="Rbsml_uS13_C"/>
</dbReference>
<dbReference type="InterPro" id="IPR001892">
    <property type="entry name" value="Ribosomal_uS13"/>
</dbReference>
<dbReference type="InterPro" id="IPR010979">
    <property type="entry name" value="Ribosomal_uS13-like_H2TH"/>
</dbReference>
<dbReference type="InterPro" id="IPR019980">
    <property type="entry name" value="Ribosomal_uS13_bac-type"/>
</dbReference>
<dbReference type="InterPro" id="IPR018269">
    <property type="entry name" value="Ribosomal_uS13_CS"/>
</dbReference>
<dbReference type="NCBIfam" id="TIGR03631">
    <property type="entry name" value="uS13_bact"/>
    <property type="match status" value="1"/>
</dbReference>
<dbReference type="PANTHER" id="PTHR10871">
    <property type="entry name" value="30S RIBOSOMAL PROTEIN S13/40S RIBOSOMAL PROTEIN S18"/>
    <property type="match status" value="1"/>
</dbReference>
<dbReference type="PANTHER" id="PTHR10871:SF1">
    <property type="entry name" value="SMALL RIBOSOMAL SUBUNIT PROTEIN US13M"/>
    <property type="match status" value="1"/>
</dbReference>
<dbReference type="Pfam" id="PF00416">
    <property type="entry name" value="Ribosomal_S13"/>
    <property type="match status" value="1"/>
</dbReference>
<dbReference type="PIRSF" id="PIRSF002134">
    <property type="entry name" value="Ribosomal_S13"/>
    <property type="match status" value="1"/>
</dbReference>
<dbReference type="SUPFAM" id="SSF46946">
    <property type="entry name" value="S13-like H2TH domain"/>
    <property type="match status" value="1"/>
</dbReference>
<dbReference type="PROSITE" id="PS00646">
    <property type="entry name" value="RIBOSOMAL_S13_1"/>
    <property type="match status" value="1"/>
</dbReference>
<dbReference type="PROSITE" id="PS50159">
    <property type="entry name" value="RIBOSOMAL_S13_2"/>
    <property type="match status" value="1"/>
</dbReference>
<gene>
    <name evidence="1" type="primary">rpsM</name>
    <name type="ordered locus">DvMF_0102</name>
</gene>
<keyword id="KW-0687">Ribonucleoprotein</keyword>
<keyword id="KW-0689">Ribosomal protein</keyword>
<keyword id="KW-0694">RNA-binding</keyword>
<keyword id="KW-0699">rRNA-binding</keyword>
<keyword id="KW-0820">tRNA-binding</keyword>
<evidence type="ECO:0000255" key="1">
    <source>
        <dbReference type="HAMAP-Rule" id="MF_01315"/>
    </source>
</evidence>
<evidence type="ECO:0000256" key="2">
    <source>
        <dbReference type="SAM" id="MobiDB-lite"/>
    </source>
</evidence>
<evidence type="ECO:0000305" key="3"/>
<name>RS13_NITV9</name>